<comment type="function">
    <text evidence="4 5 6">Effector showing tyrosine-phosphatase activity required for host defense suppression. Functions inside plant cells causing suppression of HR (hypersensitive response), PR1 gene expression and oxidative burst probably by interfering with a MAPK (mitogen-activated protein kinase) pathway. MAPK cascades are known to activate defense-related transcription factors. Inhibits plant pattern-recognition receptors (PRRs) activation.</text>
</comment>
<comment type="catalytic activity">
    <reaction evidence="1">
        <text>O-phospho-L-tyrosyl-[protein] + H2O = L-tyrosyl-[protein] + phosphate</text>
        <dbReference type="Rhea" id="RHEA:10684"/>
        <dbReference type="Rhea" id="RHEA-COMP:10136"/>
        <dbReference type="Rhea" id="RHEA-COMP:20101"/>
        <dbReference type="ChEBI" id="CHEBI:15377"/>
        <dbReference type="ChEBI" id="CHEBI:43474"/>
        <dbReference type="ChEBI" id="CHEBI:46858"/>
        <dbReference type="ChEBI" id="CHEBI:61978"/>
        <dbReference type="EC" id="3.1.3.48"/>
    </reaction>
</comment>
<comment type="activity regulation">
    <text>Inhibited by sodium orthovanadate.</text>
</comment>
<comment type="subunit">
    <text evidence="6">Interacts with EFR and FLS2 (via the kinase and cytoplasmic domains).</text>
</comment>
<comment type="interaction">
    <interactant intactId="EBI-16096022">
        <id>Q79LY0</id>
    </interactant>
    <interactant intactId="EBI-8801168">
        <id>C0LGT6</id>
        <label>EFR</label>
    </interactant>
    <organismsDiffer>true</organismsDiffer>
    <experiments>3</experiments>
</comment>
<comment type="subcellular location">
    <subcellularLocation>
        <location evidence="3">Secreted</location>
    </subcellularLocation>
    <text>Secreted via type III secretion system (T3SS).</text>
</comment>
<comment type="induction">
    <text evidence="4 5">Transcriptionally induced by HrpL.</text>
</comment>
<comment type="domain">
    <text evidence="5">The N-terminal domain (residues 1-142) retains 70% identity to the N-terminal 142 residues of AvrPphD, and is required for translocation into plant cells via T3SS.</text>
</comment>
<comment type="miscellaneous">
    <text>HopPtoD2 is not present in all strains of P.syringae.</text>
</comment>
<keyword id="KW-0378">Hydrolase</keyword>
<keyword id="KW-0928">Hypersensitive response elicitation</keyword>
<keyword id="KW-0597">Phosphoprotein</keyword>
<keyword id="KW-0904">Protein phosphatase</keyword>
<keyword id="KW-1185">Reference proteome</keyword>
<keyword id="KW-0964">Secreted</keyword>
<keyword id="KW-0843">Virulence</keyword>
<dbReference type="EC" id="3.1.3.48"/>
<dbReference type="EMBL" id="AF469470">
    <property type="protein sequence ID" value="AAO33450.1"/>
    <property type="molecule type" value="Genomic_DNA"/>
</dbReference>
<dbReference type="EMBL" id="AY198373">
    <property type="protein sequence ID" value="AAO43976.1"/>
    <property type="molecule type" value="Genomic_DNA"/>
</dbReference>
<dbReference type="EMBL" id="AE016853">
    <property type="protein sequence ID" value="AAO58160.1"/>
    <property type="molecule type" value="Genomic_DNA"/>
</dbReference>
<dbReference type="RefSeq" id="NP_794465.1">
    <property type="nucleotide sequence ID" value="NC_004578.1"/>
</dbReference>
<dbReference type="RefSeq" id="WP_011105134.1">
    <property type="nucleotide sequence ID" value="NC_004578.1"/>
</dbReference>
<dbReference type="SMR" id="Q79LY0"/>
<dbReference type="DIP" id="DIP-61675N"/>
<dbReference type="IntAct" id="Q79LY0">
    <property type="interactions" value="2"/>
</dbReference>
<dbReference type="STRING" id="223283.PSPTO_4722"/>
<dbReference type="DNASU" id="1186405"/>
<dbReference type="GeneID" id="83340040"/>
<dbReference type="KEGG" id="pst:PSPTO_4722"/>
<dbReference type="PATRIC" id="fig|223283.9.peg.4834"/>
<dbReference type="eggNOG" id="COG5599">
    <property type="taxonomic scope" value="Bacteria"/>
</dbReference>
<dbReference type="HOGENOM" id="CLU_586436_0_0_6"/>
<dbReference type="OrthoDB" id="21920at2"/>
<dbReference type="PHI-base" id="PHI:7237"/>
<dbReference type="PHI-base" id="PHI:7265"/>
<dbReference type="PHI-base" id="PHI:992"/>
<dbReference type="Proteomes" id="UP000002515">
    <property type="component" value="Chromosome"/>
</dbReference>
<dbReference type="GO" id="GO:0005576">
    <property type="term" value="C:extracellular region"/>
    <property type="evidence" value="ECO:0007669"/>
    <property type="project" value="UniProtKB-SubCell"/>
</dbReference>
<dbReference type="GO" id="GO:0004725">
    <property type="term" value="F:protein tyrosine phosphatase activity"/>
    <property type="evidence" value="ECO:0007669"/>
    <property type="project" value="UniProtKB-EC"/>
</dbReference>
<dbReference type="GO" id="GO:0052040">
    <property type="term" value="P:symbiont-mediated perturbation of host programmed cell death"/>
    <property type="evidence" value="ECO:0007669"/>
    <property type="project" value="UniProtKB-KW"/>
</dbReference>
<dbReference type="CDD" id="cd14495">
    <property type="entry name" value="PTPLP-like"/>
    <property type="match status" value="1"/>
</dbReference>
<dbReference type="Gene3D" id="3.30.70.1690">
    <property type="match status" value="1"/>
</dbReference>
<dbReference type="Gene3D" id="3.90.190.10">
    <property type="entry name" value="Protein tyrosine phosphatase superfamily"/>
    <property type="match status" value="1"/>
</dbReference>
<dbReference type="InterPro" id="IPR029021">
    <property type="entry name" value="Prot-tyrosine_phosphatase-like"/>
</dbReference>
<dbReference type="InterPro" id="IPR016130">
    <property type="entry name" value="Tyr_Pase_AS"/>
</dbReference>
<dbReference type="InterPro" id="IPR000387">
    <property type="entry name" value="Tyr_Pase_dom"/>
</dbReference>
<dbReference type="Pfam" id="PF14566">
    <property type="entry name" value="PTPlike_phytase"/>
    <property type="match status" value="1"/>
</dbReference>
<dbReference type="SMART" id="SM01301">
    <property type="entry name" value="PTPlike_phytase"/>
    <property type="match status" value="1"/>
</dbReference>
<dbReference type="SUPFAM" id="SSF52799">
    <property type="entry name" value="(Phosphotyrosine protein) phosphatases II"/>
    <property type="match status" value="1"/>
</dbReference>
<dbReference type="PROSITE" id="PS00383">
    <property type="entry name" value="TYR_PHOSPHATASE_1"/>
    <property type="match status" value="1"/>
</dbReference>
<dbReference type="PROSITE" id="PS50056">
    <property type="entry name" value="TYR_PHOSPHATASE_2"/>
    <property type="match status" value="1"/>
</dbReference>
<reference key="1">
    <citation type="journal article" date="2002" name="Mol. Plant Microbe Interact.">
        <title>A gene in the Pseudomonas syringae pv. tomato Hrp pathogenicity island conserved effector locus, hopPtoA1, contributes to efficient formation of bacterial colonies in planta and is duplicated elsewhere in the genome.</title>
        <authorList>
            <person name="Badel J.L."/>
            <person name="Charkowski A.O."/>
            <person name="Deng W.-L."/>
            <person name="Collmer A."/>
        </authorList>
    </citation>
    <scope>NUCLEOTIDE SEQUENCE [GENOMIC DNA]</scope>
    <source>
        <strain>ATCC BAA-871 / DC3000</strain>
    </source>
</reference>
<reference key="2">
    <citation type="submission" date="2002-12" db="EMBL/GenBank/DDBJ databases">
        <authorList>
            <person name="Buell C.R."/>
            <person name="Berry K.J."/>
            <person name="Fedorova N.B."/>
            <person name="Feldblynm T.V."/>
            <person name="Gwinn M.L."/>
            <person name="Haft D.H."/>
            <person name="Khouri H.M."/>
            <person name="Nelson W.C."/>
            <person name="Peterson J."/>
            <person name="Russell D."/>
            <person name="Tran B."/>
            <person name="Umayam L."/>
            <person name="Utterback T.R."/>
            <person name="Van Aken S.E."/>
        </authorList>
    </citation>
    <scope>NUCLEOTIDE SEQUENCE [GENOMIC DNA]</scope>
    <source>
        <strain>ATCC BAA-871 / DC3000</strain>
    </source>
</reference>
<reference key="3">
    <citation type="journal article" date="2003" name="Mol. Microbiol.">
        <title>The Pseudomonas syringae type III-secreted protein HopPtoD2 possesses protein tyrosine phosphatase activity and suppresses programmed cell death in plants.</title>
        <authorList>
            <person name="Espinosa A."/>
            <person name="Guo M."/>
            <person name="Tam V.C."/>
            <person name="Fu Z.Q."/>
            <person name="Alfano J.R."/>
        </authorList>
    </citation>
    <scope>NUCLEOTIDE SEQUENCE [GENOMIC DNA]</scope>
    <scope>FUNCTION AS A PHOSPHATASE</scope>
    <scope>INDUCTION</scope>
    <scope>MUTAGENESIS OF CYS-378</scope>
    <source>
        <strain>ATCC BAA-871 / DC3000</strain>
    </source>
</reference>
<reference key="4">
    <citation type="journal article" date="2003" name="Proc. Natl. Acad. Sci. U.S.A.">
        <title>The complete genome sequence of the Arabidopsis and tomato pathogen Pseudomonas syringae pv. tomato DC3000.</title>
        <authorList>
            <person name="Buell C.R."/>
            <person name="Joardar V."/>
            <person name="Lindeberg M."/>
            <person name="Selengut J."/>
            <person name="Paulsen I.T."/>
            <person name="Gwinn M.L."/>
            <person name="Dodson R.J."/>
            <person name="DeBoy R.T."/>
            <person name="Durkin A.S."/>
            <person name="Kolonay J.F."/>
            <person name="Madupu R."/>
            <person name="Daugherty S.C."/>
            <person name="Brinkac L.M."/>
            <person name="Beanan M.J."/>
            <person name="Haft D.H."/>
            <person name="Nelson W.C."/>
            <person name="Davidsen T.M."/>
            <person name="Zafar N."/>
            <person name="Zhou L."/>
            <person name="Liu J."/>
            <person name="Yuan Q."/>
            <person name="Khouri H.M."/>
            <person name="Fedorova N.B."/>
            <person name="Tran B."/>
            <person name="Russell D."/>
            <person name="Berry K.J."/>
            <person name="Utterback T.R."/>
            <person name="Van Aken S.E."/>
            <person name="Feldblyum T.V."/>
            <person name="D'Ascenzo M."/>
            <person name="Deng W.-L."/>
            <person name="Ramos A.R."/>
            <person name="Alfano J.R."/>
            <person name="Cartinhour S."/>
            <person name="Chatterjee A.K."/>
            <person name="Delaney T.P."/>
            <person name="Lazarowitz S.G."/>
            <person name="Martin G.B."/>
            <person name="Schneider D.J."/>
            <person name="Tang X."/>
            <person name="Bender C.L."/>
            <person name="White O."/>
            <person name="Fraser C.M."/>
            <person name="Collmer A."/>
        </authorList>
    </citation>
    <scope>NUCLEOTIDE SEQUENCE [LARGE SCALE GENOMIC DNA]</scope>
    <source>
        <strain>ATCC BAA-871 / DC3000</strain>
    </source>
</reference>
<reference key="5">
    <citation type="journal article" date="2002" name="Proc. Natl. Acad. Sci. U.S.A.">
        <title>Genomewide identification of proteins secreted by the Hrp type III protein secretion system of Pseudomonas syringae pv. tomato DC3000.</title>
        <authorList>
            <person name="Petnicki-Ocwieja T."/>
            <person name="Schneider D.J."/>
            <person name="Tam V.C."/>
            <person name="Chancey S.T."/>
            <person name="Shan L."/>
            <person name="Jamir Y."/>
            <person name="Schechter L.M."/>
            <person name="Janes M.D."/>
            <person name="Buell C.R."/>
            <person name="Tang X."/>
            <person name="Collmer A."/>
            <person name="Alfano J.R."/>
        </authorList>
    </citation>
    <scope>SUBCELLULAR LOCATION</scope>
    <source>
        <strain>ATCC BAA-871 / DC3000</strain>
    </source>
</reference>
<reference key="6">
    <citation type="journal article" date="2003" name="Mol. Microbiol.">
        <title>A translocated protein tyrosine phosphatase of Pseudomonas syringae pv. tomato DC3000 modulates plant defence response to infection.</title>
        <authorList>
            <person name="Bretz J.R."/>
            <person name="Mock N.M."/>
            <person name="Charity J.C."/>
            <person name="Zeyad S."/>
            <person name="Baker C.J."/>
            <person name="Hutcheson S.W."/>
        </authorList>
    </citation>
    <scope>FUNCTION AS A PHOSPHATASE</scope>
    <scope>DOMAIN</scope>
    <scope>INDUCTION</scope>
    <source>
        <strain>ATCC BAA-871 / DC3000</strain>
    </source>
</reference>
<reference key="7">
    <citation type="journal article" date="2014" name="EMBO J.">
        <title>The Arabidopsis PEPR pathway couples local and systemic plant immunity.</title>
        <authorList>
            <person name="Ross A."/>
            <person name="Yamada K."/>
            <person name="Hiruma K."/>
            <person name="Yamashita-Yamada M."/>
            <person name="Lu X."/>
            <person name="Takano Y."/>
            <person name="Tsuda K."/>
            <person name="Saijo Y."/>
        </authorList>
    </citation>
    <scope>FUNCTION</scope>
    <scope>INTERACTION WITH EFR AND FLS2</scope>
    <scope>MUTAGENESIS OF CYS-378</scope>
</reference>
<organism>
    <name type="scientific">Pseudomonas syringae pv. tomato (strain ATCC BAA-871 / DC3000)</name>
    <dbReference type="NCBI Taxonomy" id="223283"/>
    <lineage>
        <taxon>Bacteria</taxon>
        <taxon>Pseudomonadati</taxon>
        <taxon>Pseudomonadota</taxon>
        <taxon>Gammaproteobacteria</taxon>
        <taxon>Pseudomonadales</taxon>
        <taxon>Pseudomonadaceae</taxon>
        <taxon>Pseudomonas</taxon>
    </lineage>
</organism>
<protein>
    <recommendedName>
        <fullName>Effector protein hopD2</fullName>
        <ecNumber>3.1.3.48</ecNumber>
    </recommendedName>
    <alternativeName>
        <fullName>Tyrosine-protein phosphatase hopPtoD2</fullName>
    </alternativeName>
</protein>
<gene>
    <name type="primary">hopD2</name>
    <name type="synonym">hopA01</name>
    <name type="synonym">hopPtoD2</name>
    <name type="ordered locus">PSPTO_4722</name>
</gene>
<sequence length="468" mass="51380">MNPLQPIQHSITNSQMSGGQQLEAEGSQAHNSYSHPDRISLSQLSQSAHLALDHLSTQPNTDHQRVASLVRNAVQDGKFQLQSSNDTQVTYKTSVCPPANADTMGAAHLINNELTVQARLNDQLEYDIVSAHLYGPSEAISIDASSPPSANDLASSGLSERTHLGMNRVLLRYAVPPRETEDQCVMVIDKMPPPKHGKMSFFRTTNDLSKLPLGMETGGLSDLKLAGCERISSVEQVKSIRAALGGGPLTVLDLREESHAIVNGLPITLRGPMDWANAGLSQVDGAARESAMITELKRTKSLTLVDANYVKGKKSNPQTTELKNLNVRSEREVVTEAGATYRRVAITDHNRPSPEATDELVDIMRHCLQANESLVVHCNGGRGRTTTAMIMVDMLKNARNHSAETLITRMAKLSYDYNMTDLGSISALKRPFLEDRLKFLQAFHDYARNNPSGLSLNWTQWRAKIALE</sequence>
<proteinExistence type="evidence at protein level"/>
<name>HOPD2_PSESM</name>
<accession>Q79LY0</accession>
<accession>Q87W44</accession>
<feature type="chain" id="PRO_0000094863" description="Effector protein hopD2">
    <location>
        <begin position="1"/>
        <end position="468"/>
    </location>
</feature>
<feature type="domain" description="Tyrosine-protein phosphatase">
    <location>
        <begin position="143"/>
        <end position="468"/>
    </location>
</feature>
<feature type="region of interest" description="Disordered" evidence="2">
    <location>
        <begin position="1"/>
        <end position="35"/>
    </location>
</feature>
<feature type="compositionally biased region" description="Polar residues" evidence="2">
    <location>
        <begin position="1"/>
        <end position="20"/>
    </location>
</feature>
<feature type="active site" description="Phosphocysteine intermediate">
    <location>
        <position position="378"/>
    </location>
</feature>
<feature type="mutagenesis site" description="Loss of phosphatase activity and decreased inhibition of EFR phosphorylation." evidence="4 6">
    <original>C</original>
    <variation>S</variation>
    <location>
        <position position="378"/>
    </location>
</feature>
<evidence type="ECO:0000255" key="1">
    <source>
        <dbReference type="PROSITE-ProRule" id="PRU10044"/>
    </source>
</evidence>
<evidence type="ECO:0000256" key="2">
    <source>
        <dbReference type="SAM" id="MobiDB-lite"/>
    </source>
</evidence>
<evidence type="ECO:0000269" key="3">
    <source>
    </source>
</evidence>
<evidence type="ECO:0000269" key="4">
    <source>
    </source>
</evidence>
<evidence type="ECO:0000269" key="5">
    <source>
    </source>
</evidence>
<evidence type="ECO:0000269" key="6">
    <source>
    </source>
</evidence>